<reference key="1">
    <citation type="journal article" date="2006" name="J. Virol.">
        <title>Genome of invertebrate iridescent virus type 3 (mosquito iridescent virus).</title>
        <authorList>
            <person name="Delhon G."/>
            <person name="Tulman E.R."/>
            <person name="Afonso C.L."/>
            <person name="Lu Z."/>
            <person name="Becnel J.J."/>
            <person name="Moser B.A."/>
            <person name="Kutish G.F."/>
            <person name="Rock D.L."/>
        </authorList>
    </citation>
    <scope>NUCLEOTIDE SEQUENCE [LARGE SCALE GENOMIC DNA]</scope>
</reference>
<keyword id="KW-0378">Hydrolase</keyword>
<keyword id="KW-0904">Protein phosphatase</keyword>
<keyword id="KW-1185">Reference proteome</keyword>
<proteinExistence type="inferred from homology"/>
<evidence type="ECO:0000255" key="1">
    <source>
        <dbReference type="PROSITE-ProRule" id="PRU00336"/>
    </source>
</evidence>
<evidence type="ECO:0000305" key="2"/>
<feature type="chain" id="PRO_0000376904" description="Putative CTD phosphatase-like protein 355R">
    <location>
        <begin position="1"/>
        <end position="186"/>
    </location>
</feature>
<feature type="domain" description="FCP1 homology" evidence="1">
    <location>
        <begin position="2"/>
        <end position="182"/>
    </location>
</feature>
<name>VF355_IIV3</name>
<gene>
    <name type="ORF">IIV3-104L</name>
</gene>
<organismHost>
    <name type="scientific">Aedes vexans</name>
    <name type="common">Inland floodwater mosquito</name>
    <name type="synonym">Culex vexans</name>
    <dbReference type="NCBI Taxonomy" id="7163"/>
</organismHost>
<organismHost>
    <name type="scientific">Culex territans</name>
    <dbReference type="NCBI Taxonomy" id="42431"/>
</organismHost>
<organismHost>
    <name type="scientific">Culiseta annulata</name>
    <dbReference type="NCBI Taxonomy" id="332058"/>
</organismHost>
<organismHost>
    <name type="scientific">Ochlerotatus sollicitans</name>
    <name type="common">eastern saltmarsh mosquito</name>
    <dbReference type="NCBI Taxonomy" id="310513"/>
</organismHost>
<organismHost>
    <name type="scientific">Ochlerotatus taeniorhynchus</name>
    <name type="common">Black salt marsh mosquito</name>
    <name type="synonym">Aedes taeniorhynchus</name>
    <dbReference type="NCBI Taxonomy" id="329105"/>
</organismHost>
<organismHost>
    <name type="scientific">Psorophora ferox</name>
    <dbReference type="NCBI Taxonomy" id="7183"/>
</organismHost>
<comment type="function">
    <text evidence="2">May function as a phosphatase.</text>
</comment>
<comment type="similarity">
    <text evidence="2">Belongs to the IIV-6 355R family.</text>
</comment>
<sequence>MENNKKKLILLDLDNTLICAEDLDTVKDKKRLSQAQKQFRTVRMEDYYDIFERPHLQEFLDYLFKNFKVGVWTASSKDYAIFVIKNFITAPQNKVKPDRKIEIFLCSHHCNVSKKYFKGISKDLKLVTDQWKIIDLSQVKLVDDLEKLANHQPENVIHVKPFFYDEPNSKNDTELLKVQKTLETFK</sequence>
<accession>Q196V6</accession>
<organism>
    <name type="scientific">Invertebrate iridescent virus 3</name>
    <name type="common">IIV-3</name>
    <name type="synonym">Mosquito iridescent virus</name>
    <dbReference type="NCBI Taxonomy" id="345201"/>
    <lineage>
        <taxon>Viruses</taxon>
        <taxon>Varidnaviria</taxon>
        <taxon>Bamfordvirae</taxon>
        <taxon>Nucleocytoviricota</taxon>
        <taxon>Megaviricetes</taxon>
        <taxon>Pimascovirales</taxon>
        <taxon>Iridoviridae</taxon>
        <taxon>Betairidovirinae</taxon>
        <taxon>Chloriridovirus</taxon>
    </lineage>
</organism>
<dbReference type="EC" id="3.1.3.-"/>
<dbReference type="EMBL" id="DQ643392">
    <property type="protein sequence ID" value="ABF82134.1"/>
    <property type="molecule type" value="Genomic_DNA"/>
</dbReference>
<dbReference type="RefSeq" id="YP_654676.1">
    <property type="nucleotide sequence ID" value="NC_008187.1"/>
</dbReference>
<dbReference type="SMR" id="Q196V6"/>
<dbReference type="KEGG" id="vg:4156248"/>
<dbReference type="OrthoDB" id="18352at10239"/>
<dbReference type="Proteomes" id="UP000001358">
    <property type="component" value="Genome"/>
</dbReference>
<dbReference type="GO" id="GO:0004721">
    <property type="term" value="F:phosphoprotein phosphatase activity"/>
    <property type="evidence" value="ECO:0007669"/>
    <property type="project" value="UniProtKB-KW"/>
</dbReference>
<dbReference type="Gene3D" id="3.40.50.1000">
    <property type="entry name" value="HAD superfamily/HAD-like"/>
    <property type="match status" value="1"/>
</dbReference>
<dbReference type="InterPro" id="IPR004274">
    <property type="entry name" value="FCP1_dom"/>
</dbReference>
<dbReference type="InterPro" id="IPR036412">
    <property type="entry name" value="HAD-like_sf"/>
</dbReference>
<dbReference type="InterPro" id="IPR023214">
    <property type="entry name" value="HAD_sf"/>
</dbReference>
<dbReference type="InterPro" id="IPR050365">
    <property type="entry name" value="TIM50"/>
</dbReference>
<dbReference type="PANTHER" id="PTHR12210">
    <property type="entry name" value="DULLARD PROTEIN PHOSPHATASE"/>
    <property type="match status" value="1"/>
</dbReference>
<dbReference type="Pfam" id="PF03031">
    <property type="entry name" value="NIF"/>
    <property type="match status" value="1"/>
</dbReference>
<dbReference type="SMART" id="SM00577">
    <property type="entry name" value="CPDc"/>
    <property type="match status" value="1"/>
</dbReference>
<dbReference type="SUPFAM" id="SSF56784">
    <property type="entry name" value="HAD-like"/>
    <property type="match status" value="1"/>
</dbReference>
<dbReference type="PROSITE" id="PS50969">
    <property type="entry name" value="FCP1"/>
    <property type="match status" value="1"/>
</dbReference>
<protein>
    <recommendedName>
        <fullName>Putative CTD phosphatase-like protein 355R</fullName>
        <ecNumber>3.1.3.-</ecNumber>
    </recommendedName>
</protein>